<feature type="chain" id="PRO_0000180876" description="Flagellar M-ring protein">
    <location>
        <begin position="1"/>
        <end position="580"/>
    </location>
</feature>
<feature type="transmembrane region" description="Helical" evidence="2">
    <location>
        <begin position="29"/>
        <end position="49"/>
    </location>
</feature>
<feature type="transmembrane region" description="Helical" evidence="2">
    <location>
        <begin position="445"/>
        <end position="465"/>
    </location>
</feature>
<feature type="region of interest" description="Disordered" evidence="3">
    <location>
        <begin position="273"/>
        <end position="339"/>
    </location>
</feature>
<feature type="compositionally biased region" description="Basic and acidic residues" evidence="3">
    <location>
        <begin position="274"/>
        <end position="308"/>
    </location>
</feature>
<feature type="compositionally biased region" description="Polar residues" evidence="3">
    <location>
        <begin position="309"/>
        <end position="331"/>
    </location>
</feature>
<accession>Q8YDM4</accession>
<accession>Q8YDM3</accession>
<dbReference type="EMBL" id="AE008918">
    <property type="protein sequence ID" value="AAL53392.1"/>
    <property type="status" value="ALT_SEQ"/>
    <property type="molecule type" value="Genomic_DNA"/>
</dbReference>
<dbReference type="EMBL" id="AE008918">
    <property type="protein sequence ID" value="AAL53393.1"/>
    <property type="status" value="ALT_SEQ"/>
    <property type="molecule type" value="Genomic_DNA"/>
</dbReference>
<dbReference type="PIR" id="AE3528">
    <property type="entry name" value="AE3528"/>
</dbReference>
<dbReference type="PIR" id="AF3528">
    <property type="entry name" value="AF3528"/>
</dbReference>
<dbReference type="SMR" id="Q8YDM4"/>
<dbReference type="KEGG" id="bme:BMEII0151"/>
<dbReference type="KEGG" id="bme:BMEII0152"/>
<dbReference type="eggNOG" id="COG1766">
    <property type="taxonomic scope" value="Bacteria"/>
</dbReference>
<dbReference type="PRO" id="PR:Q8YDM4"/>
<dbReference type="Proteomes" id="UP000000419">
    <property type="component" value="Chromosome II"/>
</dbReference>
<dbReference type="GO" id="GO:0009431">
    <property type="term" value="C:bacterial-type flagellum basal body, MS ring"/>
    <property type="evidence" value="ECO:0007669"/>
    <property type="project" value="InterPro"/>
</dbReference>
<dbReference type="GO" id="GO:0005886">
    <property type="term" value="C:plasma membrane"/>
    <property type="evidence" value="ECO:0007669"/>
    <property type="project" value="UniProtKB-SubCell"/>
</dbReference>
<dbReference type="GO" id="GO:0003774">
    <property type="term" value="F:cytoskeletal motor activity"/>
    <property type="evidence" value="ECO:0007669"/>
    <property type="project" value="InterPro"/>
</dbReference>
<dbReference type="GO" id="GO:0071973">
    <property type="term" value="P:bacterial-type flagellum-dependent cell motility"/>
    <property type="evidence" value="ECO:0007669"/>
    <property type="project" value="InterPro"/>
</dbReference>
<dbReference type="Gene3D" id="3.30.300.30">
    <property type="match status" value="1"/>
</dbReference>
<dbReference type="InterPro" id="IPR045851">
    <property type="entry name" value="AMP-bd_C_sf"/>
</dbReference>
<dbReference type="InterPro" id="IPR013556">
    <property type="entry name" value="Flag_M-ring_C"/>
</dbReference>
<dbReference type="InterPro" id="IPR000067">
    <property type="entry name" value="FlgMring_FliF"/>
</dbReference>
<dbReference type="InterPro" id="IPR006182">
    <property type="entry name" value="FliF_N_dom"/>
</dbReference>
<dbReference type="InterPro" id="IPR043427">
    <property type="entry name" value="YscJ/FliF"/>
</dbReference>
<dbReference type="NCBIfam" id="TIGR00206">
    <property type="entry name" value="fliF"/>
    <property type="match status" value="1"/>
</dbReference>
<dbReference type="PANTHER" id="PTHR30046">
    <property type="entry name" value="FLAGELLAR M-RING PROTEIN"/>
    <property type="match status" value="1"/>
</dbReference>
<dbReference type="PANTHER" id="PTHR30046:SF0">
    <property type="entry name" value="FLAGELLAR M-RING PROTEIN"/>
    <property type="match status" value="1"/>
</dbReference>
<dbReference type="Pfam" id="PF01514">
    <property type="entry name" value="YscJ_FliF"/>
    <property type="match status" value="1"/>
</dbReference>
<dbReference type="Pfam" id="PF08345">
    <property type="entry name" value="YscJ_FliF_C"/>
    <property type="match status" value="1"/>
</dbReference>
<dbReference type="PIRSF" id="PIRSF004862">
    <property type="entry name" value="FliF"/>
    <property type="match status" value="1"/>
</dbReference>
<dbReference type="PRINTS" id="PR01009">
    <property type="entry name" value="FLGMRINGFLIF"/>
</dbReference>
<gene>
    <name type="primary">fliF</name>
    <name type="ordered locus">BMEII0151/BMEII0152</name>
</gene>
<reference key="1">
    <citation type="journal article" date="2002" name="Proc. Natl. Acad. Sci. U.S.A.">
        <title>The genome sequence of the facultative intracellular pathogen Brucella melitensis.</title>
        <authorList>
            <person name="DelVecchio V.G."/>
            <person name="Kapatral V."/>
            <person name="Redkar R.J."/>
            <person name="Patra G."/>
            <person name="Mujer C."/>
            <person name="Los T."/>
            <person name="Ivanova N."/>
            <person name="Anderson I."/>
            <person name="Bhattacharyya A."/>
            <person name="Lykidis A."/>
            <person name="Reznik G."/>
            <person name="Jablonski L."/>
            <person name="Larsen N."/>
            <person name="D'Souza M."/>
            <person name="Bernal A."/>
            <person name="Mazur M."/>
            <person name="Goltsman E."/>
            <person name="Selkov E."/>
            <person name="Elzer P.H."/>
            <person name="Hagius S."/>
            <person name="O'Callaghan D."/>
            <person name="Letesson J.-J."/>
            <person name="Haselkorn R."/>
            <person name="Kyrpides N.C."/>
            <person name="Overbeek R."/>
        </authorList>
    </citation>
    <scope>NUCLEOTIDE SEQUENCE [LARGE SCALE GENOMIC DNA]</scope>
    <source>
        <strain>ATCC 23456 / CCUG 17765 / NCTC 10094 / 16M</strain>
    </source>
</reference>
<reference key="2">
    <citation type="journal article" date="2005" name="Cell. Microbiol.">
        <title>The sheathed flagellum of Brucella melitensis is involved in persistence in a murine model of infection.</title>
        <authorList>
            <person name="Fretin D."/>
            <person name="Fauconnier A."/>
            <person name="Koehler S."/>
            <person name="Halling S."/>
            <person name="Leonard S."/>
            <person name="Nijskens C."/>
            <person name="Ferooz J."/>
            <person name="Lestrate P."/>
            <person name="Delrue R.-M."/>
            <person name="Danese I."/>
            <person name="Vandenhaute J."/>
            <person name="Tibor A."/>
            <person name="DeBolle X."/>
            <person name="Letesson J.-J."/>
        </authorList>
    </citation>
    <scope>FUNCTION IN INFECTION PERSISTENCE</scope>
    <scope>EXPRESSION</scope>
    <scope>DISRUPTION PHENOTYPE</scope>
    <source>
        <strain>ATCC 23456 / CCUG 17765 / NCTC 10094 / 16M</strain>
    </source>
</reference>
<comment type="function">
    <text evidence="1 4">The M ring may be actively involved in energy transduction (By similarity). The flagellum is required to cause a persistent disease in a murine model of infection.</text>
</comment>
<comment type="subunit">
    <text evidence="1">The basal body constitutes a major portion of the flagellar organelle and consists of five rings (E,L,P,S, and M) mounted on a central rod. The M ring is integral to the inner membrane of the cell and may be connected to the flagellar rod via the S ring. The S (supramembrane ring) lies just distal to the M ring. The L and P rings lie in the outer membrane and the periplasmic space, respectively (By similarity).</text>
</comment>
<comment type="subcellular location">
    <subcellularLocation>
        <location evidence="1">Cell inner membrane</location>
        <topology evidence="1">Multi-pass membrane protein</topology>
    </subcellularLocation>
    <subcellularLocation>
        <location evidence="1">Bacterial flagellum basal body</location>
    </subcellularLocation>
</comment>
<comment type="induction">
    <text>Transiently expressed during the early exponential phase.</text>
</comment>
<comment type="disruption phenotype">
    <text evidence="4">A fliF mutant is attenuated in a murine model of infection. As the infection progresses, the number of cfu per spleen from mice infected with the mutant is significantly lower than the number from mice infected with the wild-type.</text>
</comment>
<comment type="miscellaneous">
    <text>Induced at 24 and 48 hours post infection in HeLa cells.</text>
</comment>
<comment type="similarity">
    <text evidence="5">Belongs to the FliF family.</text>
</comment>
<comment type="caution">
    <text evidence="5">Despite the presence of a stop codon in position 243 in the fliF gene and in position 127 in the flhA gene, it has been shown that B.melitensis is able to express genes corresponding to the M ring, the hook and the filament of the flagellar apparatus in the early log phase of growth in 2YT broth. Under these conditions, a polar and sheathed flagellar structure is visible by transmission electron microscopy.</text>
</comment>
<comment type="sequence caution" evidence="5">
    <conflict type="erroneous termination">
        <sequence resource="EMBL-CDS" id="AAL53393"/>
    </conflict>
    <text>Truncated C-terminus.</text>
</comment>
<sequence length="580" mass="62161">MAVVWMQQNFQQLIEQLKGTLGKLGARKLIALGLVGAALMGAILYTSIYLGRPSYETLYVGLSRDDVNRMGLALGEAGIPFDVKSDGSSILVPIGKAENARMYLAEKGLPTSNNAGYELFDNMGSLGLTSFMQEITRVRALEGEIARTIQAIRGVKAARVHIVLAEKGSFRRGDQKPSASVVIRAEGGFSAESAQSIRQLVAAAVPSLDASSVTVLDTNGHLLASAGEGANGAALMTASLEQQVASHVDDSIRKALAPYLGLGHFQTSVQAALDTDRRQTKETTYDPESRVERSVRVVRESGDSRNNRNDNATGVEQNIPQEQIQNRNGESSTEKTDRREELTNYEVNSMTVSTVSDGYSIKRLSIAVVIDQARLLQTAGTTPPPANFVDQQITKIRDLVATAAGLNTNRGDVINVTAVNFLDSAGADMEPVSAPWTDTLLRQSGSYANALAILAAVGLLIWFGLRPLLRDQNVKPAGTEVAIREAGEVATPNFIGGAESVGEGVQAVIGGPAAYADQMKTSLSDLRQRMRMPAKLRLEQMIEMDEERVAAVLKQWIHETASGREADPAKASAMPELKAA</sequence>
<name>FLIF_BRUME</name>
<proteinExistence type="evidence at protein level"/>
<keyword id="KW-0975">Bacterial flagellum</keyword>
<keyword id="KW-0997">Cell inner membrane</keyword>
<keyword id="KW-1003">Cell membrane</keyword>
<keyword id="KW-0472">Membrane</keyword>
<keyword id="KW-0812">Transmembrane</keyword>
<keyword id="KW-1133">Transmembrane helix</keyword>
<evidence type="ECO:0000250" key="1"/>
<evidence type="ECO:0000255" key="2"/>
<evidence type="ECO:0000256" key="3">
    <source>
        <dbReference type="SAM" id="MobiDB-lite"/>
    </source>
</evidence>
<evidence type="ECO:0000269" key="4">
    <source>
    </source>
</evidence>
<evidence type="ECO:0000305" key="5"/>
<protein>
    <recommendedName>
        <fullName>Flagellar M-ring protein</fullName>
    </recommendedName>
</protein>
<organism>
    <name type="scientific">Brucella melitensis biotype 1 (strain ATCC 23456 / CCUG 17765 / NCTC 10094 / 16M)</name>
    <dbReference type="NCBI Taxonomy" id="224914"/>
    <lineage>
        <taxon>Bacteria</taxon>
        <taxon>Pseudomonadati</taxon>
        <taxon>Pseudomonadota</taxon>
        <taxon>Alphaproteobacteria</taxon>
        <taxon>Hyphomicrobiales</taxon>
        <taxon>Brucellaceae</taxon>
        <taxon>Brucella/Ochrobactrum group</taxon>
        <taxon>Brucella</taxon>
    </lineage>
</organism>